<organism>
    <name type="scientific">Salmonella typhimurium (strain LT2 / SGSC1412 / ATCC 700720)</name>
    <dbReference type="NCBI Taxonomy" id="99287"/>
    <lineage>
        <taxon>Bacteria</taxon>
        <taxon>Pseudomonadati</taxon>
        <taxon>Pseudomonadota</taxon>
        <taxon>Gammaproteobacteria</taxon>
        <taxon>Enterobacterales</taxon>
        <taxon>Enterobacteriaceae</taxon>
        <taxon>Salmonella</taxon>
    </lineage>
</organism>
<sequence length="109" mass="12015">MFGKGGLGNLMKQAQQMQEKMQKMQEEIAQLEVTGESGAGLVKVTINGAHNCRRVEIDPSLLEDDKEMLEDLVAAAFNDAARRIEETQKEKMASVSSGMQLPPGFKMPF</sequence>
<proteinExistence type="inferred from homology"/>
<protein>
    <recommendedName>
        <fullName evidence="1">Nucleoid-associated protein YbaB</fullName>
    </recommendedName>
</protein>
<reference key="1">
    <citation type="journal article" date="2001" name="Nature">
        <title>Complete genome sequence of Salmonella enterica serovar Typhimurium LT2.</title>
        <authorList>
            <person name="McClelland M."/>
            <person name="Sanderson K.E."/>
            <person name="Spieth J."/>
            <person name="Clifton S.W."/>
            <person name="Latreille P."/>
            <person name="Courtney L."/>
            <person name="Porwollik S."/>
            <person name="Ali J."/>
            <person name="Dante M."/>
            <person name="Du F."/>
            <person name="Hou S."/>
            <person name="Layman D."/>
            <person name="Leonard S."/>
            <person name="Nguyen C."/>
            <person name="Scott K."/>
            <person name="Holmes A."/>
            <person name="Grewal N."/>
            <person name="Mulvaney E."/>
            <person name="Ryan E."/>
            <person name="Sun H."/>
            <person name="Florea L."/>
            <person name="Miller W."/>
            <person name="Stoneking T."/>
            <person name="Nhan M."/>
            <person name="Waterston R."/>
            <person name="Wilson R.K."/>
        </authorList>
    </citation>
    <scope>NUCLEOTIDE SEQUENCE [LARGE SCALE GENOMIC DNA]</scope>
    <source>
        <strain>LT2 / SGSC1412 / ATCC 700720</strain>
    </source>
</reference>
<comment type="function">
    <text evidence="1">Binds to DNA and alters its conformation. May be involved in regulation of gene expression, nucleoid organization and DNA protection.</text>
</comment>
<comment type="subunit">
    <text evidence="1">Homodimer.</text>
</comment>
<comment type="subcellular location">
    <subcellularLocation>
        <location evidence="1">Cytoplasm</location>
        <location evidence="1">Nucleoid</location>
    </subcellularLocation>
</comment>
<comment type="similarity">
    <text evidence="1">Belongs to the YbaB/EbfC family.</text>
</comment>
<accession>P0A8B8</accession>
<accession>P09994</accession>
<accession>P17577</accession>
<keyword id="KW-0963">Cytoplasm</keyword>
<keyword id="KW-0238">DNA-binding</keyword>
<keyword id="KW-1185">Reference proteome</keyword>
<gene>
    <name evidence="1" type="primary">ybaB</name>
    <name type="ordered locus">STM0485</name>
</gene>
<evidence type="ECO:0000255" key="1">
    <source>
        <dbReference type="HAMAP-Rule" id="MF_00274"/>
    </source>
</evidence>
<dbReference type="EMBL" id="AE006468">
    <property type="protein sequence ID" value="AAL19439.1"/>
    <property type="molecule type" value="Genomic_DNA"/>
</dbReference>
<dbReference type="RefSeq" id="NP_459480.1">
    <property type="nucleotide sequence ID" value="NC_003197.2"/>
</dbReference>
<dbReference type="RefSeq" id="WP_000467098.1">
    <property type="nucleotide sequence ID" value="NC_003197.2"/>
</dbReference>
<dbReference type="SMR" id="P0A8B8"/>
<dbReference type="STRING" id="99287.STM0485"/>
<dbReference type="PaxDb" id="99287-STM0485"/>
<dbReference type="GeneID" id="1252005"/>
<dbReference type="KEGG" id="stm:STM0485"/>
<dbReference type="PATRIC" id="fig|99287.12.peg.518"/>
<dbReference type="HOGENOM" id="CLU_140930_0_0_6"/>
<dbReference type="OMA" id="MGNMMKQ"/>
<dbReference type="PhylomeDB" id="P0A8B8"/>
<dbReference type="BioCyc" id="SENT99287:STM0485-MONOMER"/>
<dbReference type="Proteomes" id="UP000001014">
    <property type="component" value="Chromosome"/>
</dbReference>
<dbReference type="GO" id="GO:0043590">
    <property type="term" value="C:bacterial nucleoid"/>
    <property type="evidence" value="ECO:0007669"/>
    <property type="project" value="UniProtKB-UniRule"/>
</dbReference>
<dbReference type="GO" id="GO:0005829">
    <property type="term" value="C:cytosol"/>
    <property type="evidence" value="ECO:0000318"/>
    <property type="project" value="GO_Central"/>
</dbReference>
<dbReference type="GO" id="GO:0003677">
    <property type="term" value="F:DNA binding"/>
    <property type="evidence" value="ECO:0000318"/>
    <property type="project" value="GO_Central"/>
</dbReference>
<dbReference type="FunFam" id="3.30.1310.10:FF:000001">
    <property type="entry name" value="Nucleoid-associated protein YbaB"/>
    <property type="match status" value="1"/>
</dbReference>
<dbReference type="Gene3D" id="3.30.1310.10">
    <property type="entry name" value="Nucleoid-associated protein YbaB-like domain"/>
    <property type="match status" value="1"/>
</dbReference>
<dbReference type="HAMAP" id="MF_00274">
    <property type="entry name" value="DNA_YbaB_EbfC"/>
    <property type="match status" value="1"/>
</dbReference>
<dbReference type="InterPro" id="IPR036894">
    <property type="entry name" value="YbaB-like_sf"/>
</dbReference>
<dbReference type="InterPro" id="IPR004401">
    <property type="entry name" value="YbaB/EbfC"/>
</dbReference>
<dbReference type="NCBIfam" id="TIGR00103">
    <property type="entry name" value="DNA_YbaB_EbfC"/>
    <property type="match status" value="1"/>
</dbReference>
<dbReference type="PANTHER" id="PTHR33449">
    <property type="entry name" value="NUCLEOID-ASSOCIATED PROTEIN YBAB"/>
    <property type="match status" value="1"/>
</dbReference>
<dbReference type="PANTHER" id="PTHR33449:SF1">
    <property type="entry name" value="NUCLEOID-ASSOCIATED PROTEIN YBAB"/>
    <property type="match status" value="1"/>
</dbReference>
<dbReference type="Pfam" id="PF02575">
    <property type="entry name" value="YbaB_DNA_bd"/>
    <property type="match status" value="1"/>
</dbReference>
<dbReference type="PIRSF" id="PIRSF004555">
    <property type="entry name" value="UCP004555"/>
    <property type="match status" value="1"/>
</dbReference>
<dbReference type="SUPFAM" id="SSF82607">
    <property type="entry name" value="YbaB-like"/>
    <property type="match status" value="1"/>
</dbReference>
<feature type="chain" id="PRO_0000170432" description="Nucleoid-associated protein YbaB">
    <location>
        <begin position="1"/>
        <end position="109"/>
    </location>
</feature>
<name>YBAB_SALTY</name>